<reference key="1">
    <citation type="journal article" date="2008" name="Nat. Biotechnol.">
        <title>Genome sequencing and analysis of the filamentous fungus Penicillium chrysogenum.</title>
        <authorList>
            <person name="van den Berg M.A."/>
            <person name="Albang R."/>
            <person name="Albermann K."/>
            <person name="Badger J.H."/>
            <person name="Daran J.-M."/>
            <person name="Driessen A.J.M."/>
            <person name="Garcia-Estrada C."/>
            <person name="Fedorova N.D."/>
            <person name="Harris D.M."/>
            <person name="Heijne W.H.M."/>
            <person name="Joardar V.S."/>
            <person name="Kiel J.A.K.W."/>
            <person name="Kovalchuk A."/>
            <person name="Martin J.F."/>
            <person name="Nierman W.C."/>
            <person name="Nijland J.G."/>
            <person name="Pronk J.T."/>
            <person name="Roubos J.A."/>
            <person name="van der Klei I.J."/>
            <person name="van Peij N.N.M.E."/>
            <person name="Veenhuis M."/>
            <person name="von Doehren H."/>
            <person name="Wagner C."/>
            <person name="Wortman J.R."/>
            <person name="Bovenberg R.A.L."/>
        </authorList>
    </citation>
    <scope>NUCLEOTIDE SEQUENCE [LARGE SCALE GENOMIC DNA]</scope>
    <source>
        <strain>ATCC 28089 / DSM 1075 / NRRL 1951 / Wisconsin 54-1255</strain>
    </source>
</reference>
<reference key="2">
    <citation type="journal article" date="2013" name="Eukaryot. Cell">
        <title>Members of the Penicillium chrysogenum velvet complex play functionally opposing roles in the regulation of penicillin biosynthesis and conidiation.</title>
        <authorList>
            <person name="Kopke K."/>
            <person name="Hoff B."/>
            <person name="Bloemendal S."/>
            <person name="Katschorowski A."/>
            <person name="Kamerewerd J."/>
            <person name="Kueck U."/>
        </authorList>
    </citation>
    <scope>FUNCTION</scope>
    <scope>DISRUPTION PHENOTYPE</scope>
    <scope>SUBCELLULAR LOCATION</scope>
    <scope>INTERACTION WITH VOSA AND VELA</scope>
</reference>
<evidence type="ECO:0000250" key="1">
    <source>
        <dbReference type="UniProtKB" id="Q5BBM1"/>
    </source>
</evidence>
<evidence type="ECO:0000255" key="2">
    <source>
        <dbReference type="PROSITE-ProRule" id="PRU01165"/>
    </source>
</evidence>
<evidence type="ECO:0000256" key="3">
    <source>
        <dbReference type="SAM" id="MobiDB-lite"/>
    </source>
</evidence>
<evidence type="ECO:0000269" key="4">
    <source>
    </source>
</evidence>
<evidence type="ECO:0000303" key="5">
    <source>
    </source>
</evidence>
<evidence type="ECO:0000305" key="6"/>
<sequence>MPHGFDKLLHPEPEPQSPSPPPPPRRPSTQSRYHLHIRQQPIAARACGAGDRDRRPVDPPPIVQILLTDFDSNSQEDRDLLQDPRFTVGYRDGNRDREREREHERERERERETDGVARTDDNFSTPLLSGKAFMSPFYVDADPDPNSAPAHPSSISDPHISNPPHHVYNHAASRLHQPATFFIFADLSIRSAGLYRLQFRLMNWGSVEDTGQSMPILAQAWSDPFRVYPAKDFPGMRDSSILAEGLKELGFVELKTRGHGKGKGKKRR</sequence>
<dbReference type="EMBL" id="AM920437">
    <property type="protein sequence ID" value="CAP98467.1"/>
    <property type="molecule type" value="Genomic_DNA"/>
</dbReference>
<dbReference type="RefSeq" id="XP_002565125.1">
    <property type="nucleotide sequence ID" value="XM_002565079.1"/>
</dbReference>
<dbReference type="SMR" id="B6HQN4"/>
<dbReference type="STRING" id="500485.B6HQN4"/>
<dbReference type="VEuPathDB" id="FungiDB:PCH_Pc22g11790"/>
<dbReference type="eggNOG" id="ENOG502RYR6">
    <property type="taxonomic scope" value="Eukaryota"/>
</dbReference>
<dbReference type="HOGENOM" id="CLU_054061_0_0_1"/>
<dbReference type="OMA" id="PMHAGHQ"/>
<dbReference type="OrthoDB" id="3056235at2759"/>
<dbReference type="BioCyc" id="PCHR:PC22G11790-MONOMER"/>
<dbReference type="Proteomes" id="UP000000724">
    <property type="component" value="Contig Pc00c22"/>
</dbReference>
<dbReference type="GO" id="GO:0005634">
    <property type="term" value="C:nucleus"/>
    <property type="evidence" value="ECO:0007669"/>
    <property type="project" value="UniProtKB-SubCell"/>
</dbReference>
<dbReference type="GO" id="GO:0030435">
    <property type="term" value="P:sporulation resulting in formation of a cellular spore"/>
    <property type="evidence" value="ECO:0007669"/>
    <property type="project" value="UniProtKB-KW"/>
</dbReference>
<dbReference type="Gene3D" id="2.60.40.3960">
    <property type="entry name" value="Velvet domain"/>
    <property type="match status" value="1"/>
</dbReference>
<dbReference type="InterPro" id="IPR021740">
    <property type="entry name" value="Velvet"/>
</dbReference>
<dbReference type="InterPro" id="IPR037525">
    <property type="entry name" value="Velvet_dom"/>
</dbReference>
<dbReference type="InterPro" id="IPR038491">
    <property type="entry name" value="Velvet_dom_sf"/>
</dbReference>
<dbReference type="PANTHER" id="PTHR33572:SF17">
    <property type="entry name" value="SEXUAL DEVELOPMENT REGULATOR VELC"/>
    <property type="match status" value="1"/>
</dbReference>
<dbReference type="PANTHER" id="PTHR33572">
    <property type="entry name" value="SPORE DEVELOPMENT REGULATOR VOSA"/>
    <property type="match status" value="1"/>
</dbReference>
<dbReference type="Pfam" id="PF11754">
    <property type="entry name" value="Velvet"/>
    <property type="match status" value="2"/>
</dbReference>
<dbReference type="PROSITE" id="PS51821">
    <property type="entry name" value="VELVET"/>
    <property type="match status" value="1"/>
</dbReference>
<keyword id="KW-0539">Nucleus</keyword>
<keyword id="KW-1185">Reference proteome</keyword>
<keyword id="KW-0749">Sporulation</keyword>
<keyword id="KW-0804">Transcription</keyword>
<keyword id="KW-0805">Transcription regulation</keyword>
<accession>B6HQN4</accession>
<comment type="function">
    <text evidence="1">Velvet-domain-containing protein that acts as a positive regulator of sexual development (By similarity).</text>
</comment>
<comment type="subunit">
    <text evidence="4">Interacts with velA and vosA (PubMed:23264641).</text>
</comment>
<comment type="subcellular location">
    <subcellularLocation>
        <location evidence="4">Nucleus</location>
    </subcellularLocation>
</comment>
<comment type="disruption phenotype">
    <text evidence="4">Leads to a marked reduction in penicillin biosynthesis (PubMed:23264641).</text>
</comment>
<comment type="similarity">
    <text evidence="6">Belongs to the velvet family. VelC subfamily.</text>
</comment>
<gene>
    <name evidence="5" type="primary">velC</name>
    <name type="ORF">PCH_Pc22g11790</name>
</gene>
<feature type="chain" id="PRO_0000435920" description="Sexual development regulator velC">
    <location>
        <begin position="1"/>
        <end position="268"/>
    </location>
</feature>
<feature type="domain" description="Velvet" evidence="2">
    <location>
        <begin position="28"/>
        <end position="257"/>
    </location>
</feature>
<feature type="region of interest" description="Disordered" evidence="3">
    <location>
        <begin position="1"/>
        <end position="124"/>
    </location>
</feature>
<feature type="region of interest" description="Disordered" evidence="3">
    <location>
        <begin position="142"/>
        <end position="165"/>
    </location>
</feature>
<feature type="compositionally biased region" description="Basic and acidic residues" evidence="3">
    <location>
        <begin position="1"/>
        <end position="13"/>
    </location>
</feature>
<feature type="compositionally biased region" description="Pro residues" evidence="3">
    <location>
        <begin position="14"/>
        <end position="26"/>
    </location>
</feature>
<feature type="compositionally biased region" description="Basic and acidic residues" evidence="3">
    <location>
        <begin position="92"/>
        <end position="121"/>
    </location>
</feature>
<name>VELC_PENRW</name>
<organism>
    <name type="scientific">Penicillium rubens (strain ATCC 28089 / DSM 1075 / NRRL 1951 / Wisconsin 54-1255)</name>
    <name type="common">Penicillium chrysogenum</name>
    <dbReference type="NCBI Taxonomy" id="500485"/>
    <lineage>
        <taxon>Eukaryota</taxon>
        <taxon>Fungi</taxon>
        <taxon>Dikarya</taxon>
        <taxon>Ascomycota</taxon>
        <taxon>Pezizomycotina</taxon>
        <taxon>Eurotiomycetes</taxon>
        <taxon>Eurotiomycetidae</taxon>
        <taxon>Eurotiales</taxon>
        <taxon>Aspergillaceae</taxon>
        <taxon>Penicillium</taxon>
        <taxon>Penicillium chrysogenum species complex</taxon>
    </lineage>
</organism>
<protein>
    <recommendedName>
        <fullName evidence="6">Sexual development regulator velC</fullName>
    </recommendedName>
</protein>
<proteinExistence type="evidence at protein level"/>